<accession>Q02FR0</accession>
<evidence type="ECO:0000255" key="1">
    <source>
        <dbReference type="HAMAP-Rule" id="MF_01151"/>
    </source>
</evidence>
<evidence type="ECO:0000256" key="2">
    <source>
        <dbReference type="SAM" id="MobiDB-lite"/>
    </source>
</evidence>
<feature type="chain" id="PRO_1000053620" description="Protein GrpE">
    <location>
        <begin position="1"/>
        <end position="186"/>
    </location>
</feature>
<feature type="region of interest" description="Disordered" evidence="2">
    <location>
        <begin position="1"/>
        <end position="20"/>
    </location>
</feature>
<feature type="compositionally biased region" description="Polar residues" evidence="2">
    <location>
        <begin position="1"/>
        <end position="15"/>
    </location>
</feature>
<comment type="function">
    <text evidence="1">Participates actively in the response to hyperosmotic and heat shock by preventing the aggregation of stress-denatured proteins, in association with DnaK and GrpE. It is the nucleotide exchange factor for DnaK and may function as a thermosensor. Unfolded proteins bind initially to DnaJ; upon interaction with the DnaJ-bound protein, DnaK hydrolyzes its bound ATP, resulting in the formation of a stable complex. GrpE releases ADP from DnaK; ATP binding to DnaK triggers the release of the substrate protein, thus completing the reaction cycle. Several rounds of ATP-dependent interactions between DnaJ, DnaK and GrpE are required for fully efficient folding.</text>
</comment>
<comment type="subunit">
    <text evidence="1">Homodimer.</text>
</comment>
<comment type="subcellular location">
    <subcellularLocation>
        <location evidence="1">Cytoplasm</location>
    </subcellularLocation>
</comment>
<comment type="similarity">
    <text evidence="1">Belongs to the GrpE family.</text>
</comment>
<dbReference type="EMBL" id="CP000438">
    <property type="protein sequence ID" value="ABJ14145.1"/>
    <property type="molecule type" value="Genomic_DNA"/>
</dbReference>
<dbReference type="RefSeq" id="WP_003095213.1">
    <property type="nucleotide sequence ID" value="NZ_CP034244.1"/>
</dbReference>
<dbReference type="SMR" id="Q02FR0"/>
<dbReference type="KEGG" id="pau:PA14_62990"/>
<dbReference type="PseudoCAP" id="PA14_62990"/>
<dbReference type="HOGENOM" id="CLU_057217_6_0_6"/>
<dbReference type="BioCyc" id="PAER208963:G1G74-5327-MONOMER"/>
<dbReference type="Proteomes" id="UP000000653">
    <property type="component" value="Chromosome"/>
</dbReference>
<dbReference type="GO" id="GO:0005829">
    <property type="term" value="C:cytosol"/>
    <property type="evidence" value="ECO:0007669"/>
    <property type="project" value="TreeGrafter"/>
</dbReference>
<dbReference type="GO" id="GO:0000774">
    <property type="term" value="F:adenyl-nucleotide exchange factor activity"/>
    <property type="evidence" value="ECO:0007669"/>
    <property type="project" value="InterPro"/>
</dbReference>
<dbReference type="GO" id="GO:0042803">
    <property type="term" value="F:protein homodimerization activity"/>
    <property type="evidence" value="ECO:0007669"/>
    <property type="project" value="InterPro"/>
</dbReference>
<dbReference type="GO" id="GO:0051087">
    <property type="term" value="F:protein-folding chaperone binding"/>
    <property type="evidence" value="ECO:0007669"/>
    <property type="project" value="InterPro"/>
</dbReference>
<dbReference type="GO" id="GO:0051082">
    <property type="term" value="F:unfolded protein binding"/>
    <property type="evidence" value="ECO:0007669"/>
    <property type="project" value="TreeGrafter"/>
</dbReference>
<dbReference type="GO" id="GO:0006457">
    <property type="term" value="P:protein folding"/>
    <property type="evidence" value="ECO:0007669"/>
    <property type="project" value="InterPro"/>
</dbReference>
<dbReference type="CDD" id="cd00446">
    <property type="entry name" value="GrpE"/>
    <property type="match status" value="1"/>
</dbReference>
<dbReference type="FunFam" id="2.30.22.10:FF:000001">
    <property type="entry name" value="Protein GrpE"/>
    <property type="match status" value="1"/>
</dbReference>
<dbReference type="FunFam" id="3.90.20.20:FF:000014">
    <property type="entry name" value="Protein GrpE"/>
    <property type="match status" value="1"/>
</dbReference>
<dbReference type="Gene3D" id="3.90.20.20">
    <property type="match status" value="1"/>
</dbReference>
<dbReference type="Gene3D" id="2.30.22.10">
    <property type="entry name" value="Head domain of nucleotide exchange factor GrpE"/>
    <property type="match status" value="1"/>
</dbReference>
<dbReference type="HAMAP" id="MF_01151">
    <property type="entry name" value="GrpE"/>
    <property type="match status" value="1"/>
</dbReference>
<dbReference type="InterPro" id="IPR000740">
    <property type="entry name" value="GrpE"/>
</dbReference>
<dbReference type="InterPro" id="IPR013805">
    <property type="entry name" value="GrpE_coiled_coil"/>
</dbReference>
<dbReference type="InterPro" id="IPR009012">
    <property type="entry name" value="GrpE_head"/>
</dbReference>
<dbReference type="NCBIfam" id="NF010737">
    <property type="entry name" value="PRK14139.1"/>
    <property type="match status" value="1"/>
</dbReference>
<dbReference type="NCBIfam" id="NF010738">
    <property type="entry name" value="PRK14140.1"/>
    <property type="match status" value="1"/>
</dbReference>
<dbReference type="NCBIfam" id="NF010748">
    <property type="entry name" value="PRK14150.1"/>
    <property type="match status" value="1"/>
</dbReference>
<dbReference type="NCBIfam" id="NF010749">
    <property type="entry name" value="PRK14151.1"/>
    <property type="match status" value="1"/>
</dbReference>
<dbReference type="PANTHER" id="PTHR21237">
    <property type="entry name" value="GRPE PROTEIN"/>
    <property type="match status" value="1"/>
</dbReference>
<dbReference type="PANTHER" id="PTHR21237:SF23">
    <property type="entry name" value="GRPE PROTEIN HOMOLOG, MITOCHONDRIAL"/>
    <property type="match status" value="1"/>
</dbReference>
<dbReference type="Pfam" id="PF01025">
    <property type="entry name" value="GrpE"/>
    <property type="match status" value="1"/>
</dbReference>
<dbReference type="PRINTS" id="PR00773">
    <property type="entry name" value="GRPEPROTEIN"/>
</dbReference>
<dbReference type="SUPFAM" id="SSF58014">
    <property type="entry name" value="Coiled-coil domain of nucleotide exchange factor GrpE"/>
    <property type="match status" value="1"/>
</dbReference>
<dbReference type="SUPFAM" id="SSF51064">
    <property type="entry name" value="Head domain of nucleotide exchange factor GrpE"/>
    <property type="match status" value="1"/>
</dbReference>
<dbReference type="PROSITE" id="PS01071">
    <property type="entry name" value="GRPE"/>
    <property type="match status" value="1"/>
</dbReference>
<keyword id="KW-0143">Chaperone</keyword>
<keyword id="KW-0963">Cytoplasm</keyword>
<keyword id="KW-0346">Stress response</keyword>
<reference key="1">
    <citation type="journal article" date="2006" name="Genome Biol.">
        <title>Genomic analysis reveals that Pseudomonas aeruginosa virulence is combinatorial.</title>
        <authorList>
            <person name="Lee D.G."/>
            <person name="Urbach J.M."/>
            <person name="Wu G."/>
            <person name="Liberati N.T."/>
            <person name="Feinbaum R.L."/>
            <person name="Miyata S."/>
            <person name="Diggins L.T."/>
            <person name="He J."/>
            <person name="Saucier M."/>
            <person name="Deziel E."/>
            <person name="Friedman L."/>
            <person name="Li L."/>
            <person name="Grills G."/>
            <person name="Montgomery K."/>
            <person name="Kucherlapati R."/>
            <person name="Rahme L.G."/>
            <person name="Ausubel F.M."/>
        </authorList>
    </citation>
    <scope>NUCLEOTIDE SEQUENCE [LARGE SCALE GENOMIC DNA]</scope>
    <source>
        <strain>UCBPP-PA14</strain>
    </source>
</reference>
<sequence>MADEQQTLDQQTPEQPTGAAEDLTARVQELEEQLAAAQDQALRMVADLQNVRRRAEQDVEKAHKFALEKFAGDLLAVVDTLERGLEMSDPNDEAIKPMREGMELTLKMFDDTLRRYQVEALNPEGEPFNPEQHQAMAMQESASAEPGSVLKVFQKGYLLNGRLLRPAMVVVSKAPAETPPSIDEQA</sequence>
<protein>
    <recommendedName>
        <fullName evidence="1">Protein GrpE</fullName>
    </recommendedName>
    <alternativeName>
        <fullName evidence="1">HSP-70 cofactor</fullName>
    </alternativeName>
</protein>
<organism>
    <name type="scientific">Pseudomonas aeruginosa (strain UCBPP-PA14)</name>
    <dbReference type="NCBI Taxonomy" id="208963"/>
    <lineage>
        <taxon>Bacteria</taxon>
        <taxon>Pseudomonadati</taxon>
        <taxon>Pseudomonadota</taxon>
        <taxon>Gammaproteobacteria</taxon>
        <taxon>Pseudomonadales</taxon>
        <taxon>Pseudomonadaceae</taxon>
        <taxon>Pseudomonas</taxon>
    </lineage>
</organism>
<proteinExistence type="inferred from homology"/>
<name>GRPE_PSEAB</name>
<gene>
    <name evidence="1" type="primary">grpE</name>
    <name type="ordered locus">PA14_62990</name>
</gene>